<comment type="function">
    <text evidence="1">Catalyzes the radical-mediated insertion of two sulfur atoms into the C-6 and C-8 positions of the octanoyl moiety bound to the lipoyl domains of lipoate-dependent enzymes, thereby converting the octanoylated domains into lipoylated derivatives.</text>
</comment>
<comment type="catalytic activity">
    <reaction evidence="1">
        <text>[[Fe-S] cluster scaffold protein carrying a second [4Fe-4S](2+) cluster] + N(6)-octanoyl-L-lysyl-[protein] + 2 oxidized [2Fe-2S]-[ferredoxin] + 2 S-adenosyl-L-methionine + 4 H(+) = [[Fe-S] cluster scaffold protein] + N(6)-[(R)-dihydrolipoyl]-L-lysyl-[protein] + 4 Fe(3+) + 2 hydrogen sulfide + 2 5'-deoxyadenosine + 2 L-methionine + 2 reduced [2Fe-2S]-[ferredoxin]</text>
        <dbReference type="Rhea" id="RHEA:16585"/>
        <dbReference type="Rhea" id="RHEA-COMP:9928"/>
        <dbReference type="Rhea" id="RHEA-COMP:10000"/>
        <dbReference type="Rhea" id="RHEA-COMP:10001"/>
        <dbReference type="Rhea" id="RHEA-COMP:10475"/>
        <dbReference type="Rhea" id="RHEA-COMP:14568"/>
        <dbReference type="Rhea" id="RHEA-COMP:14569"/>
        <dbReference type="ChEBI" id="CHEBI:15378"/>
        <dbReference type="ChEBI" id="CHEBI:17319"/>
        <dbReference type="ChEBI" id="CHEBI:29034"/>
        <dbReference type="ChEBI" id="CHEBI:29919"/>
        <dbReference type="ChEBI" id="CHEBI:33722"/>
        <dbReference type="ChEBI" id="CHEBI:33737"/>
        <dbReference type="ChEBI" id="CHEBI:33738"/>
        <dbReference type="ChEBI" id="CHEBI:57844"/>
        <dbReference type="ChEBI" id="CHEBI:59789"/>
        <dbReference type="ChEBI" id="CHEBI:78809"/>
        <dbReference type="ChEBI" id="CHEBI:83100"/>
        <dbReference type="EC" id="2.8.1.8"/>
    </reaction>
</comment>
<comment type="cofactor">
    <cofactor evidence="1">
        <name>[4Fe-4S] cluster</name>
        <dbReference type="ChEBI" id="CHEBI:49883"/>
    </cofactor>
    <text evidence="1">Binds 2 [4Fe-4S] clusters per subunit. One cluster is coordinated with 3 cysteines and an exchangeable S-adenosyl-L-methionine.</text>
</comment>
<comment type="pathway">
    <text evidence="1">Protein modification; protein lipoylation via endogenous pathway; protein N(6)-(lipoyl)lysine from octanoyl-[acyl-carrier-protein]: step 2/2.</text>
</comment>
<comment type="subcellular location">
    <subcellularLocation>
        <location evidence="1">Cytoplasm</location>
    </subcellularLocation>
</comment>
<comment type="similarity">
    <text evidence="1">Belongs to the radical SAM superfamily. Lipoyl synthase family.</text>
</comment>
<accession>Q2IW20</accession>
<dbReference type="EC" id="2.8.1.8" evidence="1"/>
<dbReference type="EMBL" id="CP000250">
    <property type="protein sequence ID" value="ABD07590.1"/>
    <property type="molecule type" value="Genomic_DNA"/>
</dbReference>
<dbReference type="RefSeq" id="WP_011441774.1">
    <property type="nucleotide sequence ID" value="NC_007778.1"/>
</dbReference>
<dbReference type="SMR" id="Q2IW20"/>
<dbReference type="STRING" id="316058.RPB_2888"/>
<dbReference type="KEGG" id="rpb:RPB_2888"/>
<dbReference type="eggNOG" id="COG0320">
    <property type="taxonomic scope" value="Bacteria"/>
</dbReference>
<dbReference type="HOGENOM" id="CLU_033144_2_1_5"/>
<dbReference type="OrthoDB" id="9787898at2"/>
<dbReference type="UniPathway" id="UPA00538">
    <property type="reaction ID" value="UER00593"/>
</dbReference>
<dbReference type="Proteomes" id="UP000008809">
    <property type="component" value="Chromosome"/>
</dbReference>
<dbReference type="GO" id="GO:0005737">
    <property type="term" value="C:cytoplasm"/>
    <property type="evidence" value="ECO:0007669"/>
    <property type="project" value="UniProtKB-SubCell"/>
</dbReference>
<dbReference type="GO" id="GO:0051539">
    <property type="term" value="F:4 iron, 4 sulfur cluster binding"/>
    <property type="evidence" value="ECO:0007669"/>
    <property type="project" value="UniProtKB-UniRule"/>
</dbReference>
<dbReference type="GO" id="GO:0016992">
    <property type="term" value="F:lipoate synthase activity"/>
    <property type="evidence" value="ECO:0007669"/>
    <property type="project" value="UniProtKB-UniRule"/>
</dbReference>
<dbReference type="GO" id="GO:0046872">
    <property type="term" value="F:metal ion binding"/>
    <property type="evidence" value="ECO:0007669"/>
    <property type="project" value="UniProtKB-KW"/>
</dbReference>
<dbReference type="CDD" id="cd01335">
    <property type="entry name" value="Radical_SAM"/>
    <property type="match status" value="1"/>
</dbReference>
<dbReference type="FunFam" id="3.20.20.70:FF:000186">
    <property type="entry name" value="Lipoyl synthase"/>
    <property type="match status" value="1"/>
</dbReference>
<dbReference type="Gene3D" id="3.20.20.70">
    <property type="entry name" value="Aldolase class I"/>
    <property type="match status" value="1"/>
</dbReference>
<dbReference type="HAMAP" id="MF_00206">
    <property type="entry name" value="Lipoyl_synth"/>
    <property type="match status" value="1"/>
</dbReference>
<dbReference type="InterPro" id="IPR013785">
    <property type="entry name" value="Aldolase_TIM"/>
</dbReference>
<dbReference type="InterPro" id="IPR006638">
    <property type="entry name" value="Elp3/MiaA/NifB-like_rSAM"/>
</dbReference>
<dbReference type="InterPro" id="IPR003698">
    <property type="entry name" value="Lipoyl_synth"/>
</dbReference>
<dbReference type="InterPro" id="IPR007197">
    <property type="entry name" value="rSAM"/>
</dbReference>
<dbReference type="NCBIfam" id="TIGR00510">
    <property type="entry name" value="lipA"/>
    <property type="match status" value="1"/>
</dbReference>
<dbReference type="NCBIfam" id="NF004019">
    <property type="entry name" value="PRK05481.1"/>
    <property type="match status" value="1"/>
</dbReference>
<dbReference type="NCBIfam" id="NF009544">
    <property type="entry name" value="PRK12928.1"/>
    <property type="match status" value="1"/>
</dbReference>
<dbReference type="PANTHER" id="PTHR10949">
    <property type="entry name" value="LIPOYL SYNTHASE"/>
    <property type="match status" value="1"/>
</dbReference>
<dbReference type="PANTHER" id="PTHR10949:SF0">
    <property type="entry name" value="LIPOYL SYNTHASE, MITOCHONDRIAL"/>
    <property type="match status" value="1"/>
</dbReference>
<dbReference type="Pfam" id="PF04055">
    <property type="entry name" value="Radical_SAM"/>
    <property type="match status" value="1"/>
</dbReference>
<dbReference type="PIRSF" id="PIRSF005963">
    <property type="entry name" value="Lipoyl_synth"/>
    <property type="match status" value="1"/>
</dbReference>
<dbReference type="SFLD" id="SFLDF00271">
    <property type="entry name" value="lipoyl_synthase"/>
    <property type="match status" value="1"/>
</dbReference>
<dbReference type="SFLD" id="SFLDG01058">
    <property type="entry name" value="lipoyl_synthase_like"/>
    <property type="match status" value="1"/>
</dbReference>
<dbReference type="SMART" id="SM00729">
    <property type="entry name" value="Elp3"/>
    <property type="match status" value="1"/>
</dbReference>
<dbReference type="SUPFAM" id="SSF102114">
    <property type="entry name" value="Radical SAM enzymes"/>
    <property type="match status" value="1"/>
</dbReference>
<dbReference type="PROSITE" id="PS51918">
    <property type="entry name" value="RADICAL_SAM"/>
    <property type="match status" value="1"/>
</dbReference>
<keyword id="KW-0004">4Fe-4S</keyword>
<keyword id="KW-0963">Cytoplasm</keyword>
<keyword id="KW-0408">Iron</keyword>
<keyword id="KW-0411">Iron-sulfur</keyword>
<keyword id="KW-0479">Metal-binding</keyword>
<keyword id="KW-1185">Reference proteome</keyword>
<keyword id="KW-0949">S-adenosyl-L-methionine</keyword>
<keyword id="KW-0808">Transferase</keyword>
<reference key="1">
    <citation type="submission" date="2006-01" db="EMBL/GenBank/DDBJ databases">
        <title>Complete sequence of Rhodopseudomonas palustris HaA2.</title>
        <authorList>
            <consortium name="US DOE Joint Genome Institute"/>
            <person name="Copeland A."/>
            <person name="Lucas S."/>
            <person name="Lapidus A."/>
            <person name="Barry K."/>
            <person name="Detter J.C."/>
            <person name="Glavina T."/>
            <person name="Hammon N."/>
            <person name="Israni S."/>
            <person name="Pitluck S."/>
            <person name="Chain P."/>
            <person name="Malfatti S."/>
            <person name="Shin M."/>
            <person name="Vergez L."/>
            <person name="Schmutz J."/>
            <person name="Larimer F."/>
            <person name="Land M."/>
            <person name="Hauser L."/>
            <person name="Pelletier D.A."/>
            <person name="Kyrpides N."/>
            <person name="Anderson I."/>
            <person name="Oda Y."/>
            <person name="Harwood C.S."/>
            <person name="Richardson P."/>
        </authorList>
    </citation>
    <scope>NUCLEOTIDE SEQUENCE [LARGE SCALE GENOMIC DNA]</scope>
    <source>
        <strain>HaA2</strain>
    </source>
</reference>
<feature type="chain" id="PRO_1000012261" description="Lipoyl synthase">
    <location>
        <begin position="1"/>
        <end position="319"/>
    </location>
</feature>
<feature type="domain" description="Radical SAM core" evidence="2">
    <location>
        <begin position="73"/>
        <end position="289"/>
    </location>
</feature>
<feature type="region of interest" description="Disordered" evidence="3">
    <location>
        <begin position="1"/>
        <end position="28"/>
    </location>
</feature>
<feature type="compositionally biased region" description="Basic and acidic residues" evidence="3">
    <location>
        <begin position="16"/>
        <end position="28"/>
    </location>
</feature>
<feature type="binding site" evidence="1">
    <location>
        <position position="61"/>
    </location>
    <ligand>
        <name>[4Fe-4S] cluster</name>
        <dbReference type="ChEBI" id="CHEBI:49883"/>
        <label>1</label>
    </ligand>
</feature>
<feature type="binding site" evidence="1">
    <location>
        <position position="66"/>
    </location>
    <ligand>
        <name>[4Fe-4S] cluster</name>
        <dbReference type="ChEBI" id="CHEBI:49883"/>
        <label>1</label>
    </ligand>
</feature>
<feature type="binding site" evidence="1">
    <location>
        <position position="72"/>
    </location>
    <ligand>
        <name>[4Fe-4S] cluster</name>
        <dbReference type="ChEBI" id="CHEBI:49883"/>
        <label>1</label>
    </ligand>
</feature>
<feature type="binding site" evidence="1">
    <location>
        <position position="87"/>
    </location>
    <ligand>
        <name>[4Fe-4S] cluster</name>
        <dbReference type="ChEBI" id="CHEBI:49883"/>
        <label>2</label>
        <note>4Fe-4S-S-AdoMet</note>
    </ligand>
</feature>
<feature type="binding site" evidence="1">
    <location>
        <position position="91"/>
    </location>
    <ligand>
        <name>[4Fe-4S] cluster</name>
        <dbReference type="ChEBI" id="CHEBI:49883"/>
        <label>2</label>
        <note>4Fe-4S-S-AdoMet</note>
    </ligand>
</feature>
<feature type="binding site" evidence="1">
    <location>
        <position position="94"/>
    </location>
    <ligand>
        <name>[4Fe-4S] cluster</name>
        <dbReference type="ChEBI" id="CHEBI:49883"/>
        <label>2</label>
        <note>4Fe-4S-S-AdoMet</note>
    </ligand>
</feature>
<feature type="binding site" evidence="1">
    <location>
        <position position="300"/>
    </location>
    <ligand>
        <name>[4Fe-4S] cluster</name>
        <dbReference type="ChEBI" id="CHEBI:49883"/>
        <label>1</label>
    </ligand>
</feature>
<proteinExistence type="inferred from homology"/>
<protein>
    <recommendedName>
        <fullName evidence="1">Lipoyl synthase</fullName>
        <ecNumber evidence="1">2.8.1.8</ecNumber>
    </recommendedName>
    <alternativeName>
        <fullName evidence="1">Lip-syn</fullName>
        <shortName evidence="1">LS</shortName>
    </alternativeName>
    <alternativeName>
        <fullName evidence="1">Lipoate synthase</fullName>
    </alternativeName>
    <alternativeName>
        <fullName evidence="1">Lipoic acid synthase</fullName>
    </alternativeName>
    <alternativeName>
        <fullName evidence="1">Sulfur insertion protein LipA</fullName>
    </alternativeName>
</protein>
<organism>
    <name type="scientific">Rhodopseudomonas palustris (strain HaA2)</name>
    <dbReference type="NCBI Taxonomy" id="316058"/>
    <lineage>
        <taxon>Bacteria</taxon>
        <taxon>Pseudomonadati</taxon>
        <taxon>Pseudomonadota</taxon>
        <taxon>Alphaproteobacteria</taxon>
        <taxon>Hyphomicrobiales</taxon>
        <taxon>Nitrobacteraceae</taxon>
        <taxon>Rhodopseudomonas</taxon>
    </lineage>
</organism>
<gene>
    <name evidence="1" type="primary">lipA</name>
    <name type="ordered locus">RPB_2888</name>
</gene>
<evidence type="ECO:0000255" key="1">
    <source>
        <dbReference type="HAMAP-Rule" id="MF_00206"/>
    </source>
</evidence>
<evidence type="ECO:0000255" key="2">
    <source>
        <dbReference type="PROSITE-ProRule" id="PRU01266"/>
    </source>
</evidence>
<evidence type="ECO:0000256" key="3">
    <source>
        <dbReference type="SAM" id="MobiDB-lite"/>
    </source>
</evidence>
<sequence>MVVLVDTVSSTPVRPRHPEKAARPDALSPKKPDWIRVRAPTTRGYGETRSIVKENGLVTVCEEAGCPNIGECWDKKHATFMIMGDTCTRACAFCNVKTGMPGALDPNEPAYVAEATRKLGLEHLVITSVDRDDLADGGAAHFAATIRAVREACPTTTIEILTPDFLRKDGALEVVVAAKPDVFNHNLETVPSRYLSVRPGARYFHSIRLLQRVKELDPTLFTKSGIMVGLGEERHEVLQVMDDLRSAEVDFLTIGQYLQPTRKHHAVMRYVTPDEFGGYAKTAYAKGFLMVSASPMTRSSHHAGDDFAKLRAARAALAR</sequence>
<name>LIPA_RHOP2</name>